<proteinExistence type="inferred from homology"/>
<dbReference type="EC" id="1.17.7.3" evidence="1"/>
<dbReference type="EMBL" id="CP000302">
    <property type="protein sequence ID" value="ABE54542.1"/>
    <property type="molecule type" value="Genomic_DNA"/>
</dbReference>
<dbReference type="RefSeq" id="WP_011495701.1">
    <property type="nucleotide sequence ID" value="NC_007954.1"/>
</dbReference>
<dbReference type="SMR" id="Q12PT4"/>
<dbReference type="STRING" id="318161.Sden_1256"/>
<dbReference type="KEGG" id="sdn:Sden_1256"/>
<dbReference type="eggNOG" id="COG0821">
    <property type="taxonomic scope" value="Bacteria"/>
</dbReference>
<dbReference type="HOGENOM" id="CLU_042258_0_0_6"/>
<dbReference type="OrthoDB" id="9803214at2"/>
<dbReference type="UniPathway" id="UPA00056">
    <property type="reaction ID" value="UER00096"/>
</dbReference>
<dbReference type="Proteomes" id="UP000001982">
    <property type="component" value="Chromosome"/>
</dbReference>
<dbReference type="GO" id="GO:0051539">
    <property type="term" value="F:4 iron, 4 sulfur cluster binding"/>
    <property type="evidence" value="ECO:0007669"/>
    <property type="project" value="UniProtKB-UniRule"/>
</dbReference>
<dbReference type="GO" id="GO:0046429">
    <property type="term" value="F:4-hydroxy-3-methylbut-2-en-1-yl diphosphate synthase activity (ferredoxin)"/>
    <property type="evidence" value="ECO:0007669"/>
    <property type="project" value="UniProtKB-UniRule"/>
</dbReference>
<dbReference type="GO" id="GO:0141197">
    <property type="term" value="F:4-hydroxy-3-methylbut-2-enyl-diphosphate synthase activity (flavodoxin)"/>
    <property type="evidence" value="ECO:0007669"/>
    <property type="project" value="UniProtKB-EC"/>
</dbReference>
<dbReference type="GO" id="GO:0005506">
    <property type="term" value="F:iron ion binding"/>
    <property type="evidence" value="ECO:0007669"/>
    <property type="project" value="InterPro"/>
</dbReference>
<dbReference type="GO" id="GO:0019288">
    <property type="term" value="P:isopentenyl diphosphate biosynthetic process, methylerythritol 4-phosphate pathway"/>
    <property type="evidence" value="ECO:0007669"/>
    <property type="project" value="UniProtKB-UniRule"/>
</dbReference>
<dbReference type="GO" id="GO:0016114">
    <property type="term" value="P:terpenoid biosynthetic process"/>
    <property type="evidence" value="ECO:0007669"/>
    <property type="project" value="InterPro"/>
</dbReference>
<dbReference type="FunFam" id="3.20.20.20:FF:000001">
    <property type="entry name" value="4-hydroxy-3-methylbut-2-en-1-yl diphosphate synthase (flavodoxin)"/>
    <property type="match status" value="1"/>
</dbReference>
<dbReference type="FunFam" id="3.30.413.10:FF:000002">
    <property type="entry name" value="4-hydroxy-3-methylbut-2-en-1-yl diphosphate synthase (flavodoxin)"/>
    <property type="match status" value="1"/>
</dbReference>
<dbReference type="Gene3D" id="3.20.20.20">
    <property type="entry name" value="Dihydropteroate synthase-like"/>
    <property type="match status" value="1"/>
</dbReference>
<dbReference type="Gene3D" id="3.30.413.10">
    <property type="entry name" value="Sulfite Reductase Hemoprotein, domain 1"/>
    <property type="match status" value="1"/>
</dbReference>
<dbReference type="HAMAP" id="MF_00159">
    <property type="entry name" value="IspG"/>
    <property type="match status" value="1"/>
</dbReference>
<dbReference type="InterPro" id="IPR011005">
    <property type="entry name" value="Dihydropteroate_synth-like_sf"/>
</dbReference>
<dbReference type="InterPro" id="IPR016425">
    <property type="entry name" value="IspG_bac"/>
</dbReference>
<dbReference type="InterPro" id="IPR004588">
    <property type="entry name" value="IspG_bac-typ"/>
</dbReference>
<dbReference type="InterPro" id="IPR045854">
    <property type="entry name" value="NO2/SO3_Rdtase_4Fe4S_sf"/>
</dbReference>
<dbReference type="NCBIfam" id="TIGR00612">
    <property type="entry name" value="ispG_gcpE"/>
    <property type="match status" value="1"/>
</dbReference>
<dbReference type="NCBIfam" id="NF001540">
    <property type="entry name" value="PRK00366.1"/>
    <property type="match status" value="1"/>
</dbReference>
<dbReference type="PANTHER" id="PTHR30454">
    <property type="entry name" value="4-HYDROXY-3-METHYLBUT-2-EN-1-YL DIPHOSPHATE SYNTHASE"/>
    <property type="match status" value="1"/>
</dbReference>
<dbReference type="PANTHER" id="PTHR30454:SF0">
    <property type="entry name" value="4-HYDROXY-3-METHYLBUT-2-EN-1-YL DIPHOSPHATE SYNTHASE (FERREDOXIN), CHLOROPLASTIC"/>
    <property type="match status" value="1"/>
</dbReference>
<dbReference type="Pfam" id="PF04551">
    <property type="entry name" value="GcpE"/>
    <property type="match status" value="1"/>
</dbReference>
<dbReference type="PIRSF" id="PIRSF004640">
    <property type="entry name" value="IspG"/>
    <property type="match status" value="1"/>
</dbReference>
<dbReference type="SUPFAM" id="SSF51717">
    <property type="entry name" value="Dihydropteroate synthetase-like"/>
    <property type="match status" value="1"/>
</dbReference>
<dbReference type="SUPFAM" id="SSF56014">
    <property type="entry name" value="Nitrite and sulphite reductase 4Fe-4S domain-like"/>
    <property type="match status" value="1"/>
</dbReference>
<keyword id="KW-0004">4Fe-4S</keyword>
<keyword id="KW-0408">Iron</keyword>
<keyword id="KW-0411">Iron-sulfur</keyword>
<keyword id="KW-0414">Isoprene biosynthesis</keyword>
<keyword id="KW-0479">Metal-binding</keyword>
<keyword id="KW-0560">Oxidoreductase</keyword>
<keyword id="KW-1185">Reference proteome</keyword>
<organism>
    <name type="scientific">Shewanella denitrificans (strain OS217 / ATCC BAA-1090 / DSM 15013)</name>
    <dbReference type="NCBI Taxonomy" id="318161"/>
    <lineage>
        <taxon>Bacteria</taxon>
        <taxon>Pseudomonadati</taxon>
        <taxon>Pseudomonadota</taxon>
        <taxon>Gammaproteobacteria</taxon>
        <taxon>Alteromonadales</taxon>
        <taxon>Shewanellaceae</taxon>
        <taxon>Shewanella</taxon>
    </lineage>
</organism>
<sequence length="371" mass="40527">MYSETPIKRRPSSRIYVGKVPIGDGAPIAVQSMTNTKTTDVEATIAQIRALEKVGADIVRVSVPTMDAAEAFKIIKQSVNVPLVADIHFDYRIALKVAEYGVDCLRINPGNIGNEQRIRSVVECARDNNIPIRIGVNGGSLEKDLMDKYREPTPQALLESAMRHVDILDRLNFDQFKVSVKASDVFLAVESYRLLAKQIRQPLHLGITEAGGLRAGSVKSAVGLGMLLAEGIGDTIRISLAADPIEEIKVGFDILKSLRIRSRGINFIACPSCSRQEFDVINTVNELERRLEDLVTPMDVSIIGCVVNGPGEALVSHIGLTGGANKSGYYDDGVRQKERFDNLNLVDSLEAKIRAKASLMANRIAISDKTD</sequence>
<protein>
    <recommendedName>
        <fullName evidence="1">4-hydroxy-3-methylbut-2-en-1-yl diphosphate synthase (flavodoxin)</fullName>
        <ecNumber evidence="1">1.17.7.3</ecNumber>
    </recommendedName>
    <alternativeName>
        <fullName evidence="1">1-hydroxy-2-methyl-2-(E)-butenyl 4-diphosphate synthase</fullName>
    </alternativeName>
</protein>
<name>ISPG_SHEDO</name>
<accession>Q12PT4</accession>
<evidence type="ECO:0000255" key="1">
    <source>
        <dbReference type="HAMAP-Rule" id="MF_00159"/>
    </source>
</evidence>
<reference key="1">
    <citation type="submission" date="2006-03" db="EMBL/GenBank/DDBJ databases">
        <title>Complete sequence of Shewanella denitrificans OS217.</title>
        <authorList>
            <consortium name="US DOE Joint Genome Institute"/>
            <person name="Copeland A."/>
            <person name="Lucas S."/>
            <person name="Lapidus A."/>
            <person name="Barry K."/>
            <person name="Detter J.C."/>
            <person name="Glavina del Rio T."/>
            <person name="Hammon N."/>
            <person name="Israni S."/>
            <person name="Dalin E."/>
            <person name="Tice H."/>
            <person name="Pitluck S."/>
            <person name="Brettin T."/>
            <person name="Bruce D."/>
            <person name="Han C."/>
            <person name="Tapia R."/>
            <person name="Gilna P."/>
            <person name="Kiss H."/>
            <person name="Schmutz J."/>
            <person name="Larimer F."/>
            <person name="Land M."/>
            <person name="Hauser L."/>
            <person name="Kyrpides N."/>
            <person name="Lykidis A."/>
            <person name="Richardson P."/>
        </authorList>
    </citation>
    <scope>NUCLEOTIDE SEQUENCE [LARGE SCALE GENOMIC DNA]</scope>
    <source>
        <strain>OS217 / ATCC BAA-1090 / DSM 15013</strain>
    </source>
</reference>
<comment type="function">
    <text evidence="1">Converts 2C-methyl-D-erythritol 2,4-cyclodiphosphate (ME-2,4cPP) into 1-hydroxy-2-methyl-2-(E)-butenyl 4-diphosphate.</text>
</comment>
<comment type="catalytic activity">
    <reaction evidence="1">
        <text>(2E)-4-hydroxy-3-methylbut-2-enyl diphosphate + oxidized [flavodoxin] + H2O + 2 H(+) = 2-C-methyl-D-erythritol 2,4-cyclic diphosphate + reduced [flavodoxin]</text>
        <dbReference type="Rhea" id="RHEA:43604"/>
        <dbReference type="Rhea" id="RHEA-COMP:10622"/>
        <dbReference type="Rhea" id="RHEA-COMP:10623"/>
        <dbReference type="ChEBI" id="CHEBI:15377"/>
        <dbReference type="ChEBI" id="CHEBI:15378"/>
        <dbReference type="ChEBI" id="CHEBI:57618"/>
        <dbReference type="ChEBI" id="CHEBI:58210"/>
        <dbReference type="ChEBI" id="CHEBI:58483"/>
        <dbReference type="ChEBI" id="CHEBI:128753"/>
        <dbReference type="EC" id="1.17.7.3"/>
    </reaction>
</comment>
<comment type="cofactor">
    <cofactor evidence="1">
        <name>[4Fe-4S] cluster</name>
        <dbReference type="ChEBI" id="CHEBI:49883"/>
    </cofactor>
    <text evidence="1">Binds 1 [4Fe-4S] cluster.</text>
</comment>
<comment type="pathway">
    <text evidence="1">Isoprenoid biosynthesis; isopentenyl diphosphate biosynthesis via DXP pathway; isopentenyl diphosphate from 1-deoxy-D-xylulose 5-phosphate: step 5/6.</text>
</comment>
<comment type="similarity">
    <text evidence="1">Belongs to the IspG family.</text>
</comment>
<gene>
    <name evidence="1" type="primary">ispG</name>
    <name type="ordered locus">Sden_1256</name>
</gene>
<feature type="chain" id="PRO_1000011517" description="4-hydroxy-3-methylbut-2-en-1-yl diphosphate synthase (flavodoxin)">
    <location>
        <begin position="1"/>
        <end position="371"/>
    </location>
</feature>
<feature type="binding site" evidence="1">
    <location>
        <position position="270"/>
    </location>
    <ligand>
        <name>[4Fe-4S] cluster</name>
        <dbReference type="ChEBI" id="CHEBI:49883"/>
    </ligand>
</feature>
<feature type="binding site" evidence="1">
    <location>
        <position position="273"/>
    </location>
    <ligand>
        <name>[4Fe-4S] cluster</name>
        <dbReference type="ChEBI" id="CHEBI:49883"/>
    </ligand>
</feature>
<feature type="binding site" evidence="1">
    <location>
        <position position="305"/>
    </location>
    <ligand>
        <name>[4Fe-4S] cluster</name>
        <dbReference type="ChEBI" id="CHEBI:49883"/>
    </ligand>
</feature>
<feature type="binding site" evidence="1">
    <location>
        <position position="312"/>
    </location>
    <ligand>
        <name>[4Fe-4S] cluster</name>
        <dbReference type="ChEBI" id="CHEBI:49883"/>
    </ligand>
</feature>